<name>MURD2_SALTO</name>
<dbReference type="EC" id="6.3.2.53" evidence="1 2"/>
<dbReference type="EMBL" id="CP000667">
    <property type="protein sequence ID" value="ABP55442.1"/>
    <property type="molecule type" value="Genomic_DNA"/>
</dbReference>
<dbReference type="SMR" id="A4X981"/>
<dbReference type="STRING" id="369723.Strop_3005"/>
<dbReference type="KEGG" id="stp:Strop_3005"/>
<dbReference type="PATRIC" id="fig|369723.5.peg.3092"/>
<dbReference type="eggNOG" id="COG0771">
    <property type="taxonomic scope" value="Bacteria"/>
</dbReference>
<dbReference type="HOGENOM" id="CLU_032540_4_1_11"/>
<dbReference type="UniPathway" id="UPA00219"/>
<dbReference type="Proteomes" id="UP000000235">
    <property type="component" value="Chromosome"/>
</dbReference>
<dbReference type="GO" id="GO:0005737">
    <property type="term" value="C:cytoplasm"/>
    <property type="evidence" value="ECO:0007669"/>
    <property type="project" value="UniProtKB-SubCell"/>
</dbReference>
<dbReference type="GO" id="GO:0005524">
    <property type="term" value="F:ATP binding"/>
    <property type="evidence" value="ECO:0007669"/>
    <property type="project" value="UniProtKB-UniRule"/>
</dbReference>
<dbReference type="GO" id="GO:0008764">
    <property type="term" value="F:UDP-N-acetylmuramoylalanine-D-glutamate ligase activity"/>
    <property type="evidence" value="ECO:0007669"/>
    <property type="project" value="InterPro"/>
</dbReference>
<dbReference type="GO" id="GO:0051301">
    <property type="term" value="P:cell division"/>
    <property type="evidence" value="ECO:0007669"/>
    <property type="project" value="UniProtKB-KW"/>
</dbReference>
<dbReference type="GO" id="GO:0071555">
    <property type="term" value="P:cell wall organization"/>
    <property type="evidence" value="ECO:0007669"/>
    <property type="project" value="UniProtKB-KW"/>
</dbReference>
<dbReference type="GO" id="GO:0009252">
    <property type="term" value="P:peptidoglycan biosynthetic process"/>
    <property type="evidence" value="ECO:0007669"/>
    <property type="project" value="UniProtKB-UniRule"/>
</dbReference>
<dbReference type="GO" id="GO:0008360">
    <property type="term" value="P:regulation of cell shape"/>
    <property type="evidence" value="ECO:0007669"/>
    <property type="project" value="UniProtKB-KW"/>
</dbReference>
<dbReference type="Gene3D" id="3.90.190.20">
    <property type="entry name" value="Mur ligase, C-terminal domain"/>
    <property type="match status" value="1"/>
</dbReference>
<dbReference type="Gene3D" id="3.40.1190.10">
    <property type="entry name" value="Mur-like, catalytic domain"/>
    <property type="match status" value="1"/>
</dbReference>
<dbReference type="Gene3D" id="3.40.50.720">
    <property type="entry name" value="NAD(P)-binding Rossmann-like Domain"/>
    <property type="match status" value="1"/>
</dbReference>
<dbReference type="HAMAP" id="MF_00639">
    <property type="entry name" value="MurD"/>
    <property type="match status" value="1"/>
</dbReference>
<dbReference type="HAMAP" id="MF_02208">
    <property type="entry name" value="MurD2_subfam"/>
    <property type="match status" value="1"/>
</dbReference>
<dbReference type="InterPro" id="IPR036565">
    <property type="entry name" value="Mur-like_cat_sf"/>
</dbReference>
<dbReference type="InterPro" id="IPR036615">
    <property type="entry name" value="Mur_ligase_C_dom_sf"/>
</dbReference>
<dbReference type="InterPro" id="IPR013221">
    <property type="entry name" value="Mur_ligase_cen"/>
</dbReference>
<dbReference type="InterPro" id="IPR005762">
    <property type="entry name" value="MurD"/>
</dbReference>
<dbReference type="InterPro" id="IPR043687">
    <property type="entry name" value="MurD2"/>
</dbReference>
<dbReference type="NCBIfam" id="TIGR01087">
    <property type="entry name" value="murD"/>
    <property type="match status" value="1"/>
</dbReference>
<dbReference type="PANTHER" id="PTHR43692">
    <property type="entry name" value="UDP-N-ACETYLMURAMOYLALANINE--D-GLUTAMATE LIGASE"/>
    <property type="match status" value="1"/>
</dbReference>
<dbReference type="PANTHER" id="PTHR43692:SF1">
    <property type="entry name" value="UDP-N-ACETYLMURAMOYLALANINE--D-GLUTAMATE LIGASE"/>
    <property type="match status" value="1"/>
</dbReference>
<dbReference type="Pfam" id="PF08245">
    <property type="entry name" value="Mur_ligase_M"/>
    <property type="match status" value="1"/>
</dbReference>
<dbReference type="SUPFAM" id="SSF51984">
    <property type="entry name" value="MurCD N-terminal domain"/>
    <property type="match status" value="1"/>
</dbReference>
<dbReference type="SUPFAM" id="SSF53623">
    <property type="entry name" value="MurD-like peptide ligases, catalytic domain"/>
    <property type="match status" value="1"/>
</dbReference>
<dbReference type="SUPFAM" id="SSF53244">
    <property type="entry name" value="MurD-like peptide ligases, peptide-binding domain"/>
    <property type="match status" value="1"/>
</dbReference>
<organism>
    <name type="scientific">Salinispora tropica (strain ATCC BAA-916 / DSM 44818 / JCM 13857 / NBRC 105044 / CNB-440)</name>
    <dbReference type="NCBI Taxonomy" id="369723"/>
    <lineage>
        <taxon>Bacteria</taxon>
        <taxon>Bacillati</taxon>
        <taxon>Actinomycetota</taxon>
        <taxon>Actinomycetes</taxon>
        <taxon>Micromonosporales</taxon>
        <taxon>Micromonosporaceae</taxon>
        <taxon>Salinispora</taxon>
    </lineage>
</organism>
<feature type="chain" id="PRO_0000446509" description="UDP-N-acetylmuramoyl-L-alanine--L-glutamate ligase">
    <location>
        <begin position="1"/>
        <end position="448"/>
    </location>
</feature>
<feature type="binding site" evidence="1">
    <location>
        <begin position="118"/>
        <end position="124"/>
    </location>
    <ligand>
        <name>ATP</name>
        <dbReference type="ChEBI" id="CHEBI:30616"/>
    </ligand>
</feature>
<accession>A4X981</accession>
<evidence type="ECO:0000255" key="1">
    <source>
        <dbReference type="HAMAP-Rule" id="MF_02208"/>
    </source>
</evidence>
<evidence type="ECO:0000269" key="2">
    <source>
    </source>
</evidence>
<evidence type="ECO:0000303" key="3">
    <source>
    </source>
</evidence>
<evidence type="ECO:0000305" key="4"/>
<evidence type="ECO:0000305" key="5">
    <source>
    </source>
</evidence>
<evidence type="ECO:0000312" key="6">
    <source>
        <dbReference type="EMBL" id="ABP55442.1"/>
    </source>
</evidence>
<sequence>MRLSDLRGRKVAVWGTGREGRAAVVAIAAHGPADLVAVDDGGSTVSPPWDGFLATAAPLVTGDAGAQRLAAADVVVRSPGVPNTHPWLAELWRRQVPVTQGTALWMADHAARTVGVTGSKGKSTTSSLISHLLAAVDQPNVFGGNIGVPTLDLPAADLYVLELSSYQCSDLTDSPRVAVVTALFPEHLDAHGGEREYYRDKLNLLAHGPETVVVNGADPRLAAELGDRPVVRAGTPDTTHVAGGPDGTPWFHLGDQPLFPRAVLPLVGRHNEGNLCVALAVLDVLGVDVLARRDTLAVAVAGFQGLAHRLTEIVDPSGLTFVDDTLATSPYAAMHAIDAYDGRALTVIVGGADRGLDYTPLRDHLAEREITVIGVPDSGARIVAALDGLPKVRCDVTGDLVEAVRLARRVTPAGGVVLLSPAAPSYGQFRNFEHRSEVFAQAVRDTAG</sequence>
<reference key="1">
    <citation type="journal article" date="2007" name="Proc. Natl. Acad. Sci. U.S.A.">
        <title>Genome sequencing reveals complex secondary metabolome in the marine actinomycete Salinispora tropica.</title>
        <authorList>
            <person name="Udwary D.W."/>
            <person name="Zeigler L."/>
            <person name="Asolkar R.N."/>
            <person name="Singan V."/>
            <person name="Lapidus A."/>
            <person name="Fenical W."/>
            <person name="Jensen P.R."/>
            <person name="Moore B.S."/>
        </authorList>
    </citation>
    <scope>NUCLEOTIDE SEQUENCE [LARGE SCALE GENOMIC DNA]</scope>
    <source>
        <strain>ATCC BAA-916 / DSM 44818 / JCM 13857 / NBRC 105044 / CNB-440</strain>
    </source>
</reference>
<reference key="2">
    <citation type="journal article" date="2017" name="J. Am. Chem. Soc.">
        <title>A glycopeptidyl-glutamate epimerase for bacterial peptidoglycan biosynthesis.</title>
        <authorList>
            <person name="Feng R."/>
            <person name="Satoh Y."/>
            <person name="Ogasawara Y."/>
            <person name="Yoshimura T."/>
            <person name="Dairi T."/>
        </authorList>
    </citation>
    <scope>FUNCTION</scope>
    <scope>CATALYTIC ACTIVITY</scope>
    <scope>PATHWAY</scope>
    <source>
        <strain>ATCC BAA-916 / DSM 44818 / JCM 13857 / NBRC 105044 / CNB-440</strain>
    </source>
</reference>
<gene>
    <name evidence="1 3" type="primary">murD2</name>
    <name evidence="6" type="ordered locus">Strop_3005</name>
</gene>
<keyword id="KW-0067">ATP-binding</keyword>
<keyword id="KW-0131">Cell cycle</keyword>
<keyword id="KW-0132">Cell division</keyword>
<keyword id="KW-0133">Cell shape</keyword>
<keyword id="KW-0961">Cell wall biogenesis/degradation</keyword>
<keyword id="KW-0963">Cytoplasm</keyword>
<keyword id="KW-0436">Ligase</keyword>
<keyword id="KW-0547">Nucleotide-binding</keyword>
<keyword id="KW-0573">Peptidoglycan synthesis</keyword>
<keyword id="KW-1185">Reference proteome</keyword>
<comment type="function">
    <text evidence="1 2">Cell wall formation. Catalyzes the addition of L-glutamate to the nucleotide precursor UDP-N-acetylmuramoyl-L-alanine.</text>
</comment>
<comment type="catalytic activity">
    <reaction evidence="1 2">
        <text>UDP-N-acetyl-alpha-D-muramoyl-L-alanine + L-glutamate + ATP = UDP-N-acetyl-alpha-D-muramoyl-L-alanyl-L-glutamate + ADP + phosphate + H(+)</text>
        <dbReference type="Rhea" id="RHEA:58816"/>
        <dbReference type="ChEBI" id="CHEBI:15378"/>
        <dbReference type="ChEBI" id="CHEBI:29985"/>
        <dbReference type="ChEBI" id="CHEBI:30616"/>
        <dbReference type="ChEBI" id="CHEBI:43474"/>
        <dbReference type="ChEBI" id="CHEBI:83898"/>
        <dbReference type="ChEBI" id="CHEBI:142725"/>
        <dbReference type="ChEBI" id="CHEBI:456216"/>
        <dbReference type="EC" id="6.3.2.53"/>
    </reaction>
</comment>
<comment type="pathway">
    <text evidence="1 5">Cell wall biogenesis; peptidoglycan biosynthesis.</text>
</comment>
<comment type="subcellular location">
    <subcellularLocation>
        <location evidence="1 4">Cytoplasm</location>
    </subcellularLocation>
</comment>
<comment type="similarity">
    <text evidence="1 4">Belongs to the MurCDEF family. MurD2 subfamily.</text>
</comment>
<proteinExistence type="evidence at protein level"/>
<protein>
    <recommendedName>
        <fullName evidence="1 4">UDP-N-acetylmuramoyl-L-alanine--L-glutamate ligase</fullName>
        <ecNumber evidence="1 2">6.3.2.53</ecNumber>
    </recommendedName>
    <alternativeName>
        <fullName evidence="1 4">UDP-N-acetylmuramoyl-L-alanyl-L-glutamate synthetase</fullName>
        <shortName evidence="1 3">UDP-MurNAc-L-Ala-L-Glu synthetase</shortName>
    </alternativeName>
</protein>